<dbReference type="EC" id="6.1.1.22" evidence="2"/>
<dbReference type="EMBL" id="AC008148">
    <property type="protein sequence ID" value="AAD55509.1"/>
    <property type="molecule type" value="Genomic_DNA"/>
</dbReference>
<dbReference type="EMBL" id="CP002684">
    <property type="protein sequence ID" value="AEE35146.1"/>
    <property type="molecule type" value="Genomic_DNA"/>
</dbReference>
<dbReference type="PIR" id="B96734">
    <property type="entry name" value="B96734"/>
</dbReference>
<dbReference type="RefSeq" id="NP_177254.1">
    <property type="nucleotide sequence ID" value="NM_105766.3"/>
</dbReference>
<dbReference type="SMR" id="Q9SSK1"/>
<dbReference type="BioGRID" id="28656">
    <property type="interactions" value="2"/>
</dbReference>
<dbReference type="FunCoup" id="Q9SSK1">
    <property type="interactions" value="3035"/>
</dbReference>
<dbReference type="STRING" id="3702.Q9SSK1"/>
<dbReference type="GlyGen" id="Q9SSK1">
    <property type="glycosylation" value="1 site"/>
</dbReference>
<dbReference type="iPTMnet" id="Q9SSK1"/>
<dbReference type="PaxDb" id="3702-AT1G70980.1"/>
<dbReference type="ProteomicsDB" id="234128"/>
<dbReference type="EnsemblPlants" id="AT1G70980.1">
    <property type="protein sequence ID" value="AT1G70980.1"/>
    <property type="gene ID" value="AT1G70980"/>
</dbReference>
<dbReference type="GeneID" id="843436"/>
<dbReference type="Gramene" id="AT1G70980.1">
    <property type="protein sequence ID" value="AT1G70980.1"/>
    <property type="gene ID" value="AT1G70980"/>
</dbReference>
<dbReference type="KEGG" id="ath:AT1G70980"/>
<dbReference type="Araport" id="AT1G70980"/>
<dbReference type="TAIR" id="AT1G70980">
    <property type="gene designation" value="SYNC3"/>
</dbReference>
<dbReference type="eggNOG" id="KOG0554">
    <property type="taxonomic scope" value="Eukaryota"/>
</dbReference>
<dbReference type="HOGENOM" id="CLU_004553_2_0_1"/>
<dbReference type="InParanoid" id="Q9SSK1"/>
<dbReference type="OMA" id="TKFIDKG"/>
<dbReference type="PhylomeDB" id="Q9SSK1"/>
<dbReference type="PRO" id="PR:Q9SSK1"/>
<dbReference type="Proteomes" id="UP000006548">
    <property type="component" value="Chromosome 1"/>
</dbReference>
<dbReference type="ExpressionAtlas" id="Q9SSK1">
    <property type="expression patterns" value="baseline and differential"/>
</dbReference>
<dbReference type="GO" id="GO:0005829">
    <property type="term" value="C:cytosol"/>
    <property type="evidence" value="ECO:0007669"/>
    <property type="project" value="UniProtKB-SubCell"/>
</dbReference>
<dbReference type="GO" id="GO:0004816">
    <property type="term" value="F:asparagine-tRNA ligase activity"/>
    <property type="evidence" value="ECO:0007669"/>
    <property type="project" value="UniProtKB-EC"/>
</dbReference>
<dbReference type="GO" id="GO:0005524">
    <property type="term" value="F:ATP binding"/>
    <property type="evidence" value="ECO:0007669"/>
    <property type="project" value="UniProtKB-KW"/>
</dbReference>
<dbReference type="GO" id="GO:0003677">
    <property type="term" value="F:DNA binding"/>
    <property type="evidence" value="ECO:0007669"/>
    <property type="project" value="UniProtKB-KW"/>
</dbReference>
<dbReference type="GO" id="GO:0006421">
    <property type="term" value="P:asparaginyl-tRNA aminoacylation"/>
    <property type="evidence" value="ECO:0007669"/>
    <property type="project" value="InterPro"/>
</dbReference>
<dbReference type="CDD" id="cd00776">
    <property type="entry name" value="AsxRS_core"/>
    <property type="match status" value="1"/>
</dbReference>
<dbReference type="CDD" id="cd04318">
    <property type="entry name" value="EcAsnRS_like_N"/>
    <property type="match status" value="1"/>
</dbReference>
<dbReference type="FunFam" id="3.30.930.10:FF:000016">
    <property type="entry name" value="Asparagine--tRNA ligase"/>
    <property type="match status" value="1"/>
</dbReference>
<dbReference type="FunFam" id="2.40.50.140:FF:000695">
    <property type="entry name" value="Asparagine--tRNA ligase, cytoplasmic 3"/>
    <property type="match status" value="1"/>
</dbReference>
<dbReference type="Gene3D" id="3.30.930.10">
    <property type="entry name" value="Bira Bifunctional Protein, Domain 2"/>
    <property type="match status" value="1"/>
</dbReference>
<dbReference type="Gene3D" id="2.40.50.140">
    <property type="entry name" value="Nucleic acid-binding proteins"/>
    <property type="match status" value="1"/>
</dbReference>
<dbReference type="Gene3D" id="1.10.287.10">
    <property type="entry name" value="S15/NS1, RNA-binding"/>
    <property type="match status" value="1"/>
</dbReference>
<dbReference type="HAMAP" id="MF_00534">
    <property type="entry name" value="Asn_tRNA_synth"/>
    <property type="match status" value="1"/>
</dbReference>
<dbReference type="InterPro" id="IPR004364">
    <property type="entry name" value="Aa-tRNA-synt_II"/>
</dbReference>
<dbReference type="InterPro" id="IPR006195">
    <property type="entry name" value="aa-tRNA-synth_II"/>
</dbReference>
<dbReference type="InterPro" id="IPR045864">
    <property type="entry name" value="aa-tRNA-synth_II/BPL/LPL"/>
</dbReference>
<dbReference type="InterPro" id="IPR004522">
    <property type="entry name" value="Asn-tRNA-ligase"/>
</dbReference>
<dbReference type="InterPro" id="IPR002312">
    <property type="entry name" value="Asp/Asn-tRNA-synth_IIb"/>
</dbReference>
<dbReference type="InterPro" id="IPR012340">
    <property type="entry name" value="NA-bd_OB-fold"/>
</dbReference>
<dbReference type="InterPro" id="IPR004365">
    <property type="entry name" value="NA-bd_OB_tRNA"/>
</dbReference>
<dbReference type="InterPro" id="IPR000738">
    <property type="entry name" value="WHEP-TRS_dom"/>
</dbReference>
<dbReference type="NCBIfam" id="TIGR00457">
    <property type="entry name" value="asnS"/>
    <property type="match status" value="1"/>
</dbReference>
<dbReference type="NCBIfam" id="NF003037">
    <property type="entry name" value="PRK03932.1"/>
    <property type="match status" value="1"/>
</dbReference>
<dbReference type="PANTHER" id="PTHR22594:SF54">
    <property type="entry name" value="ASPARAGINE--TRNA LIGASE, CYTOPLASMIC 1-RELATED"/>
    <property type="match status" value="1"/>
</dbReference>
<dbReference type="PANTHER" id="PTHR22594">
    <property type="entry name" value="ASPARTYL/LYSYL-TRNA SYNTHETASE"/>
    <property type="match status" value="1"/>
</dbReference>
<dbReference type="Pfam" id="PF00152">
    <property type="entry name" value="tRNA-synt_2"/>
    <property type="match status" value="2"/>
</dbReference>
<dbReference type="Pfam" id="PF01336">
    <property type="entry name" value="tRNA_anti-codon"/>
    <property type="match status" value="1"/>
</dbReference>
<dbReference type="PRINTS" id="PR01042">
    <property type="entry name" value="TRNASYNTHASP"/>
</dbReference>
<dbReference type="SMART" id="SM00991">
    <property type="entry name" value="WHEP-TRS"/>
    <property type="match status" value="1"/>
</dbReference>
<dbReference type="SUPFAM" id="SSF55681">
    <property type="entry name" value="Class II aaRS and biotin synthetases"/>
    <property type="match status" value="1"/>
</dbReference>
<dbReference type="SUPFAM" id="SSF50249">
    <property type="entry name" value="Nucleic acid-binding proteins"/>
    <property type="match status" value="1"/>
</dbReference>
<dbReference type="PROSITE" id="PS50862">
    <property type="entry name" value="AA_TRNA_LIGASE_II"/>
    <property type="match status" value="1"/>
</dbReference>
<dbReference type="PROSITE" id="PS51185">
    <property type="entry name" value="WHEP_TRS_2"/>
    <property type="match status" value="1"/>
</dbReference>
<reference key="1">
    <citation type="journal article" date="2000" name="Nature">
        <title>Sequence and analysis of chromosome 1 of the plant Arabidopsis thaliana.</title>
        <authorList>
            <person name="Theologis A."/>
            <person name="Ecker J.R."/>
            <person name="Palm C.J."/>
            <person name="Federspiel N.A."/>
            <person name="Kaul S."/>
            <person name="White O."/>
            <person name="Alonso J."/>
            <person name="Altafi H."/>
            <person name="Araujo R."/>
            <person name="Bowman C.L."/>
            <person name="Brooks S.Y."/>
            <person name="Buehler E."/>
            <person name="Chan A."/>
            <person name="Chao Q."/>
            <person name="Chen H."/>
            <person name="Cheuk R.F."/>
            <person name="Chin C.W."/>
            <person name="Chung M.K."/>
            <person name="Conn L."/>
            <person name="Conway A.B."/>
            <person name="Conway A.R."/>
            <person name="Creasy T.H."/>
            <person name="Dewar K."/>
            <person name="Dunn P."/>
            <person name="Etgu P."/>
            <person name="Feldblyum T.V."/>
            <person name="Feng J.-D."/>
            <person name="Fong B."/>
            <person name="Fujii C.Y."/>
            <person name="Gill J.E."/>
            <person name="Goldsmith A.D."/>
            <person name="Haas B."/>
            <person name="Hansen N.F."/>
            <person name="Hughes B."/>
            <person name="Huizar L."/>
            <person name="Hunter J.L."/>
            <person name="Jenkins J."/>
            <person name="Johnson-Hopson C."/>
            <person name="Khan S."/>
            <person name="Khaykin E."/>
            <person name="Kim C.J."/>
            <person name="Koo H.L."/>
            <person name="Kremenetskaia I."/>
            <person name="Kurtz D.B."/>
            <person name="Kwan A."/>
            <person name="Lam B."/>
            <person name="Langin-Hooper S."/>
            <person name="Lee A."/>
            <person name="Lee J.M."/>
            <person name="Lenz C.A."/>
            <person name="Li J.H."/>
            <person name="Li Y.-P."/>
            <person name="Lin X."/>
            <person name="Liu S.X."/>
            <person name="Liu Z.A."/>
            <person name="Luros J.S."/>
            <person name="Maiti R."/>
            <person name="Marziali A."/>
            <person name="Militscher J."/>
            <person name="Miranda M."/>
            <person name="Nguyen M."/>
            <person name="Nierman W.C."/>
            <person name="Osborne B.I."/>
            <person name="Pai G."/>
            <person name="Peterson J."/>
            <person name="Pham P.K."/>
            <person name="Rizzo M."/>
            <person name="Rooney T."/>
            <person name="Rowley D."/>
            <person name="Sakano H."/>
            <person name="Salzberg S.L."/>
            <person name="Schwartz J.R."/>
            <person name="Shinn P."/>
            <person name="Southwick A.M."/>
            <person name="Sun H."/>
            <person name="Tallon L.J."/>
            <person name="Tambunga G."/>
            <person name="Toriumi M.J."/>
            <person name="Town C.D."/>
            <person name="Utterback T."/>
            <person name="Van Aken S."/>
            <person name="Vaysberg M."/>
            <person name="Vysotskaia V.S."/>
            <person name="Walker M."/>
            <person name="Wu D."/>
            <person name="Yu G."/>
            <person name="Fraser C.M."/>
            <person name="Venter J.C."/>
            <person name="Davis R.W."/>
        </authorList>
    </citation>
    <scope>NUCLEOTIDE SEQUENCE [LARGE SCALE GENOMIC DNA]</scope>
    <source>
        <strain>cv. Columbia</strain>
    </source>
</reference>
<reference key="2">
    <citation type="journal article" date="2017" name="Plant J.">
        <title>Araport11: a complete reannotation of the Arabidopsis thaliana reference genome.</title>
        <authorList>
            <person name="Cheng C.Y."/>
            <person name="Krishnakumar V."/>
            <person name="Chan A.P."/>
            <person name="Thibaud-Nissen F."/>
            <person name="Schobel S."/>
            <person name="Town C.D."/>
        </authorList>
    </citation>
    <scope>GENOME REANNOTATION</scope>
    <source>
        <strain>cv. Columbia</strain>
    </source>
</reference>
<reference key="3">
    <citation type="journal article" date="2005" name="Plant J.">
        <title>Requirement of aminoacyl-tRNA synthetases for gametogenesis and embryo development in Arabidopsis.</title>
        <authorList>
            <person name="Berg M."/>
            <person name="Rogers R."/>
            <person name="Muralla R."/>
            <person name="Meinke D."/>
        </authorList>
    </citation>
    <scope>SUBCELLULAR LOCATION</scope>
</reference>
<reference key="4">
    <citation type="journal article" date="2005" name="Proc. Natl. Acad. Sci. U.S.A.">
        <title>Dual targeting is the rule for organellar aminoacyl-tRNA synthetases in Arabidopsis thaliana.</title>
        <authorList>
            <person name="Duchene A.-M."/>
            <person name="Giritch A."/>
            <person name="Hoffmann B."/>
            <person name="Cognat V."/>
            <person name="Lancelin D."/>
            <person name="Peeters N.M."/>
            <person name="Zaepfel M."/>
            <person name="Marechal-Drouard L."/>
            <person name="Small I.D."/>
        </authorList>
    </citation>
    <scope>SUBCELLULAR LOCATION</scope>
</reference>
<reference key="5">
    <citation type="journal article" date="2012" name="Mol. Cell. Proteomics">
        <title>Comparative large-scale characterisation of plant vs. mammal proteins reveals similar and idiosyncratic N-alpha acetylation features.</title>
        <authorList>
            <person name="Bienvenut W.V."/>
            <person name="Sumpton D."/>
            <person name="Martinez A."/>
            <person name="Lilla S."/>
            <person name="Espagne C."/>
            <person name="Meinnel T."/>
            <person name="Giglione C."/>
        </authorList>
    </citation>
    <scope>ACETYLATION [LARGE SCALE ANALYSIS] AT GLY-2</scope>
    <scope>CLEAVAGE OF INITIATOR METHIONINE [LARGE SCALE ANALYSIS]</scope>
    <scope>IDENTIFICATION BY MASS SPECTROMETRY [LARGE SCALE ANALYSIS]</scope>
</reference>
<organism>
    <name type="scientific">Arabidopsis thaliana</name>
    <name type="common">Mouse-ear cress</name>
    <dbReference type="NCBI Taxonomy" id="3702"/>
    <lineage>
        <taxon>Eukaryota</taxon>
        <taxon>Viridiplantae</taxon>
        <taxon>Streptophyta</taxon>
        <taxon>Embryophyta</taxon>
        <taxon>Tracheophyta</taxon>
        <taxon>Spermatophyta</taxon>
        <taxon>Magnoliopsida</taxon>
        <taxon>eudicotyledons</taxon>
        <taxon>Gunneridae</taxon>
        <taxon>Pentapetalae</taxon>
        <taxon>rosids</taxon>
        <taxon>malvids</taxon>
        <taxon>Brassicales</taxon>
        <taxon>Brassicaceae</taxon>
        <taxon>Camelineae</taxon>
        <taxon>Arabidopsis</taxon>
    </lineage>
</organism>
<protein>
    <recommendedName>
        <fullName evidence="2">Asparagine--tRNA ligase, cytoplasmic 3</fullName>
        <ecNumber evidence="2">6.1.1.22</ecNumber>
    </recommendedName>
    <alternativeName>
        <fullName evidence="2">Asparaginyl-tRNA synthetase 3</fullName>
        <shortName evidence="2">AsnRS 3</shortName>
    </alternativeName>
</protein>
<gene>
    <name evidence="2" type="primary">SYNC3</name>
    <name type="ordered locus">At1g70980</name>
    <name type="ORF">F15H11.17</name>
</gene>
<sequence length="571" mass="63700">MGDEIVPPANQLAADNLENDGSTVQKAQFSDRVLIRSILGGGAKLAGQKVRIGGWVKTGRQQGKGTFAFLEVNDGSCPANLQVMVDSSLYDLSRLVATGTCVTVDGVLKIPPEGKGLKQSIELSVETVIAVGTVDPTTYPLPKTKLTPEFLRDVLHLRSRTNLISAVARIRNALAFATHSFFQEHSFLYIHTPIITTSDCEGAGEMFQVTTLINHTERVEQDLIDNPPPTEADVEAARLIVKERGEAVAQLKVAKASKEEITASVAQLSVAKASLAHVEERLRLKPGLPKNDGKIDYSNDFFGRQAFLTVSGQLQVETYACALSSVYTFGPTFRAENSHTSRHLAEFWMVEPEIAFADIHDDMNCAEAYVKYMCKWLMDKCGDDMELMDKNVDEGCTKRLNMVAKASFKRVTYTEAIERLEKAVAQGKVVFDNKVEWGIDLASEHERYLTEVEFDQKPIIVYNYPKGIKAFYMRLNDDEKTVAAMDVLVPKVGELIGGSQREERYDVIKQRIEEMGLPMEPYEWYLDLRRYGTVKHCGFGLGFERMIQFATGIDNIRDVIPFPRYPGKADL</sequence>
<feature type="initiator methionine" description="Removed" evidence="5">
    <location>
        <position position="1"/>
    </location>
</feature>
<feature type="chain" id="PRO_0000176493" description="Asparagine--tRNA ligase, cytoplasmic 3">
    <location>
        <begin position="2"/>
        <end position="571"/>
    </location>
</feature>
<feature type="domain" description="WHEP-TRS">
    <location>
        <begin position="233"/>
        <end position="289"/>
    </location>
</feature>
<feature type="DNA-binding region" description="OB" evidence="1">
    <location>
        <begin position="50"/>
        <end position="128"/>
    </location>
</feature>
<feature type="modified residue" description="N-acetylglycine" evidence="5">
    <location>
        <position position="2"/>
    </location>
</feature>
<keyword id="KW-0007">Acetylation</keyword>
<keyword id="KW-0030">Aminoacyl-tRNA synthetase</keyword>
<keyword id="KW-0067">ATP-binding</keyword>
<keyword id="KW-0963">Cytoplasm</keyword>
<keyword id="KW-0238">DNA-binding</keyword>
<keyword id="KW-0436">Ligase</keyword>
<keyword id="KW-0547">Nucleotide-binding</keyword>
<keyword id="KW-0648">Protein biosynthesis</keyword>
<keyword id="KW-1185">Reference proteome</keyword>
<accession>Q9SSK1</accession>
<proteinExistence type="evidence at protein level"/>
<name>SYNC3_ARATH</name>
<comment type="catalytic activity">
    <reaction evidence="2">
        <text>tRNA(Asn) + L-asparagine + ATP = L-asparaginyl-tRNA(Asn) + AMP + diphosphate + H(+)</text>
        <dbReference type="Rhea" id="RHEA:11180"/>
        <dbReference type="Rhea" id="RHEA-COMP:9659"/>
        <dbReference type="Rhea" id="RHEA-COMP:9674"/>
        <dbReference type="ChEBI" id="CHEBI:15378"/>
        <dbReference type="ChEBI" id="CHEBI:30616"/>
        <dbReference type="ChEBI" id="CHEBI:33019"/>
        <dbReference type="ChEBI" id="CHEBI:58048"/>
        <dbReference type="ChEBI" id="CHEBI:78442"/>
        <dbReference type="ChEBI" id="CHEBI:78515"/>
        <dbReference type="ChEBI" id="CHEBI:456215"/>
        <dbReference type="EC" id="6.1.1.22"/>
    </reaction>
</comment>
<comment type="subcellular location">
    <subcellularLocation>
        <location evidence="3 4">Cytoplasm</location>
        <location evidence="3 4">Cytosol</location>
    </subcellularLocation>
</comment>
<comment type="similarity">
    <text evidence="2">Belongs to the class-II aminoacyl-tRNA synthetase family.</text>
</comment>
<evidence type="ECO:0000255" key="1"/>
<evidence type="ECO:0000305" key="2"/>
<evidence type="ECO:0000305" key="3">
    <source>
    </source>
</evidence>
<evidence type="ECO:0000305" key="4">
    <source>
    </source>
</evidence>
<evidence type="ECO:0007744" key="5">
    <source>
    </source>
</evidence>